<gene>
    <name evidence="9" type="primary">Cbr1</name>
    <name evidence="9" type="synonym">Cbr</name>
</gene>
<sequence length="277" mass="30641">MSSSRPVALVTGANKGIGFAITRDLCRKFSGDVVLAARDEERGQTAVQKLQAEGLSPRFHQLDIDNPQSIRALRDFLLKEYGGLDVLVNNAGIAFKVNDDTPFHIQAEVTMKTNFFGTRDVCKELLPLIKPQGRVVNVSSMVSLRALKNCRLELQQKFRSETITEEELVGLMNKFVEDTKKGVHAEEGWPNSAYGVTKIGVTVLSRILARKLNEQRRGDKILLNACCPGWVRTDMAGPKATKSPEEGAETPVYLALLPPDAEGPHGQFVQDKKVEPW</sequence>
<protein>
    <recommendedName>
        <fullName evidence="8">Carbonyl reductase [NADPH] 1</fullName>
        <ecNumber evidence="1">1.1.1.184</ecNumber>
    </recommendedName>
    <alternativeName>
        <fullName>15-hydroxyprostaglandin dehydrogenase [NADP(+)]</fullName>
        <ecNumber evidence="3">1.1.1.196</ecNumber>
        <ecNumber evidence="1">1.1.1.197</ecNumber>
    </alternativeName>
    <alternativeName>
        <fullName evidence="3">20-beta-hydroxysteroid dehydrogenase</fullName>
    </alternativeName>
    <alternativeName>
        <fullName>Alcohol dehydrogenase [NAD(P)+] CBR1</fullName>
        <ecNumber evidence="1">1.1.1.71</ecNumber>
    </alternativeName>
    <alternativeName>
        <fullName>NADPH-dependent carbonyl reductase 1</fullName>
    </alternativeName>
    <alternativeName>
        <fullName evidence="3">Prostaglandin 9-ketoreductase</fullName>
        <shortName evidence="3">PG-9-KR</shortName>
    </alternativeName>
    <alternativeName>
        <fullName evidence="3">Prostaglandin-E(2) 9-reductase</fullName>
        <ecNumber evidence="3">1.1.1.189</ecNumber>
    </alternativeName>
</protein>
<evidence type="ECO:0000250" key="1">
    <source>
        <dbReference type="UniProtKB" id="P16152"/>
    </source>
</evidence>
<evidence type="ECO:0000250" key="2">
    <source>
        <dbReference type="UniProtKB" id="P47727"/>
    </source>
</evidence>
<evidence type="ECO:0000250" key="3">
    <source>
        <dbReference type="UniProtKB" id="Q28960"/>
    </source>
</evidence>
<evidence type="ECO:0000255" key="4">
    <source>
        <dbReference type="PROSITE-ProRule" id="PRU10001"/>
    </source>
</evidence>
<evidence type="ECO:0000256" key="5">
    <source>
        <dbReference type="SAM" id="MobiDB-lite"/>
    </source>
</evidence>
<evidence type="ECO:0000269" key="6">
    <source>
    </source>
</evidence>
<evidence type="ECO:0000269" key="7">
    <source>
    </source>
</evidence>
<evidence type="ECO:0000305" key="8"/>
<evidence type="ECO:0000312" key="9">
    <source>
        <dbReference type="MGI" id="MGI:88284"/>
    </source>
</evidence>
<evidence type="ECO:0007744" key="10">
    <source>
    </source>
</evidence>
<reference key="1">
    <citation type="journal article" date="1996" name="Genomics">
        <title>Cloning a cDNA for carbonyl reductase (Cbr) from mouse cerebellum: murine genes that express cbr map to chromosomes 16 and 11.</title>
        <authorList>
            <person name="Wei J."/>
            <person name="Dlouhy S.R."/>
            <person name="Hara A."/>
            <person name="Ghetti B."/>
            <person name="Hodes M.E."/>
        </authorList>
    </citation>
    <scope>NUCLEOTIDE SEQUENCE [MRNA]</scope>
    <source>
        <strain>CBA/CJ</strain>
        <tissue>Cerebellum</tissue>
    </source>
</reference>
<reference key="2">
    <citation type="journal article" date="2004" name="Genome Res.">
        <title>The status, quality, and expansion of the NIH full-length cDNA project: the Mammalian Gene Collection (MGC).</title>
        <authorList>
            <consortium name="The MGC Project Team"/>
        </authorList>
    </citation>
    <scope>NUCLEOTIDE SEQUENCE [LARGE SCALE MRNA]</scope>
    <source>
        <strain>FVB/N</strain>
        <tissue>Colon</tissue>
    </source>
</reference>
<reference key="3">
    <citation type="submission" date="2009-01" db="UniProtKB">
        <authorList>
            <person name="Lubec G."/>
            <person name="Klug S."/>
            <person name="Sunyer B."/>
            <person name="Chen W.-Q."/>
        </authorList>
    </citation>
    <scope>PROTEIN SEQUENCE OF 59-71; 80-96 AND 221-232</scope>
    <scope>IDENTIFICATION BY MASS SPECTROMETRY</scope>
    <source>
        <strain>OF1</strain>
        <tissue>Hippocampus</tissue>
    </source>
</reference>
<reference key="4">
    <citation type="journal article" date="2010" name="Cell">
        <title>A tissue-specific atlas of mouse protein phosphorylation and expression.</title>
        <authorList>
            <person name="Huttlin E.L."/>
            <person name="Jedrychowski M.P."/>
            <person name="Elias J.E."/>
            <person name="Goswami T."/>
            <person name="Rad R."/>
            <person name="Beausoleil S.A."/>
            <person name="Villen J."/>
            <person name="Haas W."/>
            <person name="Sowa M.E."/>
            <person name="Gygi S.P."/>
        </authorList>
    </citation>
    <scope>PHOSPHORYLATION [LARGE SCALE ANALYSIS] AT SER-30</scope>
    <scope>IDENTIFICATION BY MASS SPECTROMETRY [LARGE SCALE ANALYSIS]</scope>
    <source>
        <tissue>Brain</tissue>
        <tissue>Brown adipose tissue</tissue>
        <tissue>Heart</tissue>
        <tissue>Kidney</tissue>
        <tissue>Liver</tissue>
        <tissue>Lung</tissue>
        <tissue>Pancreas</tissue>
        <tissue>Spleen</tissue>
        <tissue>Testis</tissue>
    </source>
</reference>
<reference key="5">
    <citation type="journal article" date="2017" name="Sci. Rep.">
        <title>Carbonyl reductase 1 catalyzes 20beta-reduction of glucocorticoids, modulating receptor activation and metabolic complications of obesity.</title>
        <authorList>
            <person name="Morgan R.A."/>
            <person name="Beck K.R."/>
            <person name="Nixon M."/>
            <person name="Homer N.Z.M."/>
            <person name="Crawford A.A."/>
            <person name="Melchers D."/>
            <person name="Houtman R."/>
            <person name="Meijer O.C."/>
            <person name="Stomby A."/>
            <person name="Anderson A.J."/>
            <person name="Upreti R."/>
            <person name="Stimson R.H."/>
            <person name="Olsson T."/>
            <person name="Michoel T."/>
            <person name="Cohain A."/>
            <person name="Ruusalepp A."/>
            <person name="Schadt E.E."/>
            <person name="Bjoerkegren J.L.M."/>
            <person name="Andrew R."/>
            <person name="Kenyon C.J."/>
            <person name="Hadoke P.W.F."/>
            <person name="Odermatt A."/>
            <person name="Keen J.A."/>
            <person name="Walker B.R."/>
        </authorList>
    </citation>
    <scope>FUNCTION</scope>
</reference>
<reference key="6">
    <citation type="journal article" date="2021" name="Mol. Metab.">
        <title>Carbonyl reductase 1 amplifies glucocorticoid action in adipose tissue and impairs glucose tolerance in lean mice.</title>
        <authorList>
            <person name="Bell R.M.B."/>
            <person name="Villalobos E."/>
            <person name="Nixon M."/>
            <person name="Miguelez-Crespo A."/>
            <person name="Murphy L."/>
            <person name="Fawkes A."/>
            <person name="Coutts A."/>
            <person name="Sharp M.G.F."/>
            <person name="Koerner M.V."/>
            <person name="Allan E."/>
            <person name="Meijer O.C."/>
            <person name="Houtman R."/>
            <person name="Odermatt A."/>
            <person name="Beck K.R."/>
            <person name="Denham S.G."/>
            <person name="Lee P."/>
            <person name="Homer N.Z.M."/>
            <person name="Walker B.R."/>
            <person name="Morgan R.A."/>
        </authorList>
    </citation>
    <scope>FUNCTION</scope>
    <scope>CATALYTIC ACTIVITY</scope>
    <scope>DISRUPTION PHENOTYPE</scope>
</reference>
<name>CBR1_MOUSE</name>
<proteinExistence type="evidence at protein level"/>
<accession>P48758</accession>
<accession>Q91X28</accession>
<organism>
    <name type="scientific">Mus musculus</name>
    <name type="common">Mouse</name>
    <dbReference type="NCBI Taxonomy" id="10090"/>
    <lineage>
        <taxon>Eukaryota</taxon>
        <taxon>Metazoa</taxon>
        <taxon>Chordata</taxon>
        <taxon>Craniata</taxon>
        <taxon>Vertebrata</taxon>
        <taxon>Euteleostomi</taxon>
        <taxon>Mammalia</taxon>
        <taxon>Eutheria</taxon>
        <taxon>Euarchontoglires</taxon>
        <taxon>Glires</taxon>
        <taxon>Rodentia</taxon>
        <taxon>Myomorpha</taxon>
        <taxon>Muroidea</taxon>
        <taxon>Muridae</taxon>
        <taxon>Murinae</taxon>
        <taxon>Mus</taxon>
        <taxon>Mus</taxon>
    </lineage>
</organism>
<feature type="initiator methionine" description="Removed" evidence="1">
    <location>
        <position position="1"/>
    </location>
</feature>
<feature type="chain" id="PRO_0000054603" description="Carbonyl reductase [NADPH] 1">
    <location>
        <begin position="2"/>
        <end position="277"/>
    </location>
</feature>
<feature type="region of interest" description="Disordered" evidence="5">
    <location>
        <begin position="258"/>
        <end position="277"/>
    </location>
</feature>
<feature type="active site" description="Proton acceptor" evidence="4">
    <location>
        <position position="194"/>
    </location>
</feature>
<feature type="binding site" evidence="1">
    <location>
        <begin position="10"/>
        <end position="34"/>
    </location>
    <ligand>
        <name>NADP(+)</name>
        <dbReference type="ChEBI" id="CHEBI:58349"/>
    </ligand>
</feature>
<feature type="binding site" evidence="1">
    <location>
        <begin position="63"/>
        <end position="64"/>
    </location>
    <ligand>
        <name>NADP(+)</name>
        <dbReference type="ChEBI" id="CHEBI:58349"/>
    </ligand>
</feature>
<feature type="binding site" evidence="1">
    <location>
        <position position="90"/>
    </location>
    <ligand>
        <name>NADP(+)</name>
        <dbReference type="ChEBI" id="CHEBI:58349"/>
    </ligand>
</feature>
<feature type="binding site" evidence="1">
    <location>
        <begin position="95"/>
        <end position="97"/>
    </location>
    <ligand>
        <name>glutathione</name>
        <dbReference type="ChEBI" id="CHEBI:57925"/>
    </ligand>
</feature>
<feature type="binding site" evidence="1">
    <location>
        <position position="106"/>
    </location>
    <ligand>
        <name>glutathione</name>
        <dbReference type="ChEBI" id="CHEBI:57925"/>
    </ligand>
</feature>
<feature type="binding site" evidence="1">
    <location>
        <position position="140"/>
    </location>
    <ligand>
        <name>substrate</name>
    </ligand>
</feature>
<feature type="binding site" evidence="1">
    <location>
        <begin position="193"/>
        <end position="194"/>
    </location>
    <ligand>
        <name>glutathione</name>
        <dbReference type="ChEBI" id="CHEBI:57925"/>
    </ligand>
</feature>
<feature type="binding site" evidence="1">
    <location>
        <begin position="194"/>
        <end position="198"/>
    </location>
    <ligand>
        <name>NADP(+)</name>
        <dbReference type="ChEBI" id="CHEBI:58349"/>
    </ligand>
</feature>
<feature type="binding site" evidence="1">
    <location>
        <begin position="231"/>
        <end position="233"/>
    </location>
    <ligand>
        <name>NADP(+)</name>
        <dbReference type="ChEBI" id="CHEBI:58349"/>
    </ligand>
</feature>
<feature type="modified residue" description="N-acetylserine" evidence="1">
    <location>
        <position position="2"/>
    </location>
</feature>
<feature type="modified residue" description="Phosphoserine" evidence="2">
    <location>
        <position position="2"/>
    </location>
</feature>
<feature type="modified residue" description="Phosphoserine" evidence="10">
    <location>
        <position position="30"/>
    </location>
</feature>
<feature type="modified residue" description="N6-1-carboxyethyl lysine" evidence="1">
    <location>
        <position position="239"/>
    </location>
</feature>
<feature type="sequence conflict" description="In Ref. 1; AAB19006." evidence="8" ref="1">
    <original>N</original>
    <variation>K</variation>
    <location>
        <position position="90"/>
    </location>
</feature>
<feature type="sequence conflict" description="In Ref. 1; AAB19006." evidence="8" ref="1">
    <original>K</original>
    <variation>E</variation>
    <location>
        <position position="112"/>
    </location>
</feature>
<feature type="sequence conflict" description="In Ref. 1; AAB19006." evidence="8" ref="1">
    <original>G</original>
    <variation>E</variation>
    <location>
        <position position="218"/>
    </location>
</feature>
<keyword id="KW-0007">Acetylation</keyword>
<keyword id="KW-0963">Cytoplasm</keyword>
<keyword id="KW-0903">Direct protein sequencing</keyword>
<keyword id="KW-0443">Lipid metabolism</keyword>
<keyword id="KW-0521">NADP</keyword>
<keyword id="KW-0560">Oxidoreductase</keyword>
<keyword id="KW-0597">Phosphoprotein</keyword>
<keyword id="KW-1185">Reference proteome</keyword>
<dbReference type="EC" id="1.1.1.184" evidence="1"/>
<dbReference type="EC" id="1.1.1.196" evidence="3"/>
<dbReference type="EC" id="1.1.1.197" evidence="1"/>
<dbReference type="EC" id="1.1.1.71" evidence="1"/>
<dbReference type="EC" id="1.1.1.189" evidence="3"/>
<dbReference type="EMBL" id="U31966">
    <property type="protein sequence ID" value="AAB19006.1"/>
    <property type="molecule type" value="mRNA"/>
</dbReference>
<dbReference type="EMBL" id="BC012714">
    <property type="protein sequence ID" value="AAH12714.1"/>
    <property type="molecule type" value="mRNA"/>
</dbReference>
<dbReference type="CCDS" id="CCDS28341.1"/>
<dbReference type="RefSeq" id="NP_031646.2">
    <property type="nucleotide sequence ID" value="NM_007620.3"/>
</dbReference>
<dbReference type="SMR" id="P48758"/>
<dbReference type="BioGRID" id="198531">
    <property type="interactions" value="10"/>
</dbReference>
<dbReference type="FunCoup" id="P48758">
    <property type="interactions" value="729"/>
</dbReference>
<dbReference type="STRING" id="10090.ENSMUSP00000049394"/>
<dbReference type="GlyGen" id="P48758">
    <property type="glycosylation" value="1 site, 1 O-linked glycan (1 site)"/>
</dbReference>
<dbReference type="iPTMnet" id="P48758"/>
<dbReference type="PhosphoSitePlus" id="P48758"/>
<dbReference type="SwissPalm" id="P48758"/>
<dbReference type="REPRODUCTION-2DPAGE" id="P48758"/>
<dbReference type="CPTAC" id="non-CPTAC-3416"/>
<dbReference type="CPTAC" id="non-CPTAC-3775"/>
<dbReference type="jPOST" id="P48758"/>
<dbReference type="PaxDb" id="10090-ENSMUSP00000049394"/>
<dbReference type="ProteomicsDB" id="265567"/>
<dbReference type="Pumba" id="P48758"/>
<dbReference type="DNASU" id="12408"/>
<dbReference type="Ensembl" id="ENSMUST00000039659.9">
    <property type="protein sequence ID" value="ENSMUSP00000049394.9"/>
    <property type="gene ID" value="ENSMUSG00000051483.10"/>
</dbReference>
<dbReference type="GeneID" id="12408"/>
<dbReference type="KEGG" id="mmu:12408"/>
<dbReference type="UCSC" id="uc007zzr.1">
    <property type="organism name" value="mouse"/>
</dbReference>
<dbReference type="AGR" id="MGI:88284"/>
<dbReference type="CTD" id="873"/>
<dbReference type="MGI" id="MGI:88284">
    <property type="gene designation" value="Cbr1"/>
</dbReference>
<dbReference type="VEuPathDB" id="HostDB:ENSMUSG00000051483"/>
<dbReference type="eggNOG" id="KOG1208">
    <property type="taxonomic scope" value="Eukaryota"/>
</dbReference>
<dbReference type="GeneTree" id="ENSGT00510000046499"/>
<dbReference type="HOGENOM" id="CLU_010194_9_0_1"/>
<dbReference type="InParanoid" id="P48758"/>
<dbReference type="OMA" id="GAQTPVM"/>
<dbReference type="OrthoDB" id="7289984at2759"/>
<dbReference type="PhylomeDB" id="P48758"/>
<dbReference type="TreeFam" id="TF329359"/>
<dbReference type="BRENDA" id="1.1.1.184">
    <property type="organism ID" value="3474"/>
</dbReference>
<dbReference type="Reactome" id="R-MMU-2162123">
    <property type="pathway name" value="Synthesis of Prostaglandins (PG) and Thromboxanes (TX)"/>
</dbReference>
<dbReference type="SABIO-RK" id="P48758"/>
<dbReference type="BioGRID-ORCS" id="12408">
    <property type="hits" value="3 hits in 84 CRISPR screens"/>
</dbReference>
<dbReference type="CD-CODE" id="CE726F99">
    <property type="entry name" value="Postsynaptic density"/>
</dbReference>
<dbReference type="ChiTaRS" id="Cbr1">
    <property type="organism name" value="mouse"/>
</dbReference>
<dbReference type="PRO" id="PR:P48758"/>
<dbReference type="Proteomes" id="UP000000589">
    <property type="component" value="Chromosome 16"/>
</dbReference>
<dbReference type="RNAct" id="P48758">
    <property type="molecule type" value="protein"/>
</dbReference>
<dbReference type="Bgee" id="ENSMUSG00000051483">
    <property type="expression patterns" value="Expressed in epithelium of stomach and 278 other cell types or tissues"/>
</dbReference>
<dbReference type="ExpressionAtlas" id="P48758">
    <property type="expression patterns" value="baseline and differential"/>
</dbReference>
<dbReference type="GO" id="GO:0005737">
    <property type="term" value="C:cytoplasm"/>
    <property type="evidence" value="ECO:0007669"/>
    <property type="project" value="UniProtKB-SubCell"/>
</dbReference>
<dbReference type="GO" id="GO:0047021">
    <property type="term" value="F:15-hydroxyprostaglandin dehydrogenase (NADP+) activity"/>
    <property type="evidence" value="ECO:0000250"/>
    <property type="project" value="UniProtKB"/>
</dbReference>
<dbReference type="GO" id="GO:0047020">
    <property type="term" value="F:15-hydroxyprostaglandin-D dehydrogenase (NADP+) activity"/>
    <property type="evidence" value="ECO:0007669"/>
    <property type="project" value="UniProtKB-EC"/>
</dbReference>
<dbReference type="GO" id="GO:0004090">
    <property type="term" value="F:carbonyl reductase (NADPH) activity"/>
    <property type="evidence" value="ECO:0000250"/>
    <property type="project" value="UniProtKB"/>
</dbReference>
<dbReference type="GO" id="GO:0016616">
    <property type="term" value="F:oxidoreductase activity, acting on the CH-OH group of donors, NAD or NADP as acceptor"/>
    <property type="evidence" value="ECO:0000314"/>
    <property type="project" value="UniProtKB"/>
</dbReference>
<dbReference type="GO" id="GO:0050221">
    <property type="term" value="F:prostaglandin E2 9-reductase activity"/>
    <property type="evidence" value="ECO:0000250"/>
    <property type="project" value="UniProtKB"/>
</dbReference>
<dbReference type="GO" id="GO:0160163">
    <property type="term" value="F:S-nitrosoglutathione reductase (NADPH) activity"/>
    <property type="evidence" value="ECO:0007669"/>
    <property type="project" value="RHEA"/>
</dbReference>
<dbReference type="GO" id="GO:0008211">
    <property type="term" value="P:glucocorticoid metabolic process"/>
    <property type="evidence" value="ECO:0000314"/>
    <property type="project" value="UniProtKB"/>
</dbReference>
<dbReference type="GO" id="GO:0042373">
    <property type="term" value="P:vitamin K metabolic process"/>
    <property type="evidence" value="ECO:0000250"/>
    <property type="project" value="UniProtKB"/>
</dbReference>
<dbReference type="GO" id="GO:0006805">
    <property type="term" value="P:xenobiotic metabolic process"/>
    <property type="evidence" value="ECO:0000250"/>
    <property type="project" value="UniProtKB"/>
</dbReference>
<dbReference type="CDD" id="cd05324">
    <property type="entry name" value="carb_red_PTCR-like_SDR_c"/>
    <property type="match status" value="1"/>
</dbReference>
<dbReference type="FunFam" id="3.40.50.720:FF:000164">
    <property type="entry name" value="Carbonyl reductase [NADPH] 1"/>
    <property type="match status" value="1"/>
</dbReference>
<dbReference type="Gene3D" id="3.40.50.720">
    <property type="entry name" value="NAD(P)-binding Rossmann-like Domain"/>
    <property type="match status" value="1"/>
</dbReference>
<dbReference type="InterPro" id="IPR045313">
    <property type="entry name" value="CBR1-like"/>
</dbReference>
<dbReference type="InterPro" id="IPR036291">
    <property type="entry name" value="NAD(P)-bd_dom_sf"/>
</dbReference>
<dbReference type="InterPro" id="IPR020904">
    <property type="entry name" value="Sc_DH/Rdtase_CS"/>
</dbReference>
<dbReference type="InterPro" id="IPR002347">
    <property type="entry name" value="SDR_fam"/>
</dbReference>
<dbReference type="PANTHER" id="PTHR43963">
    <property type="entry name" value="CARBONYL REDUCTASE 1-RELATED"/>
    <property type="match status" value="1"/>
</dbReference>
<dbReference type="PANTHER" id="PTHR43963:SF2">
    <property type="entry name" value="CARBONYL REDUCTASE [NADPH] 1"/>
    <property type="match status" value="1"/>
</dbReference>
<dbReference type="Pfam" id="PF00106">
    <property type="entry name" value="adh_short"/>
    <property type="match status" value="1"/>
</dbReference>
<dbReference type="PRINTS" id="PR00081">
    <property type="entry name" value="GDHRDH"/>
</dbReference>
<dbReference type="PRINTS" id="PR00080">
    <property type="entry name" value="SDRFAMILY"/>
</dbReference>
<dbReference type="SUPFAM" id="SSF51735">
    <property type="entry name" value="NAD(P)-binding Rossmann-fold domains"/>
    <property type="match status" value="1"/>
</dbReference>
<dbReference type="PROSITE" id="PS00061">
    <property type="entry name" value="ADH_SHORT"/>
    <property type="match status" value="1"/>
</dbReference>
<comment type="function">
    <text evidence="1 3 6 7">NADPH-dependent reductase with broad substrate specificity. Catalyzes the reduction of a wide variety of carbonyl compounds including quinones, prostaglandins, menadione, plus various xenobiotics. Catalyzes the reduction of the antitumor anthracyclines doxorubicin and daunorubicin to the cardiotoxic compounds doxorubicinol and daunorubicinol (By similarity). Can convert prostaglandin E to prostaglandin F2-alpha (By similarity). Can bind glutathione, which explains its higher affinity for glutathione-conjugated substrates. Catalyzes the reduction of S-nitrosoglutathione. In addition, participates in the glucocorticoid metabolism by catalyzing the NADPH-dependent cortisol/corticosterone into 20beta-dihydrocortisol (20b-DHF) or 20beta-corticosterone (20b-DHB), which are weak agonists of NR3C1 and NR3C2 in adipose tissue (PubMed:28878267, PubMed:33785425).</text>
</comment>
<comment type="catalytic activity">
    <reaction evidence="1">
        <text>a secondary alcohol + NADP(+) = a ketone + NADPH + H(+)</text>
        <dbReference type="Rhea" id="RHEA:19257"/>
        <dbReference type="ChEBI" id="CHEBI:15378"/>
        <dbReference type="ChEBI" id="CHEBI:17087"/>
        <dbReference type="ChEBI" id="CHEBI:35681"/>
        <dbReference type="ChEBI" id="CHEBI:57783"/>
        <dbReference type="ChEBI" id="CHEBI:58349"/>
        <dbReference type="EC" id="1.1.1.184"/>
    </reaction>
</comment>
<comment type="catalytic activity">
    <reaction evidence="1">
        <text>prostaglandin F2alpha + NADP(+) = prostaglandin E2 + NADPH + H(+)</text>
        <dbReference type="Rhea" id="RHEA:24508"/>
        <dbReference type="ChEBI" id="CHEBI:15378"/>
        <dbReference type="ChEBI" id="CHEBI:57404"/>
        <dbReference type="ChEBI" id="CHEBI:57783"/>
        <dbReference type="ChEBI" id="CHEBI:58349"/>
        <dbReference type="ChEBI" id="CHEBI:606564"/>
        <dbReference type="EC" id="1.1.1.189"/>
    </reaction>
    <physiologicalReaction direction="right-to-left" evidence="3">
        <dbReference type="Rhea" id="RHEA:24510"/>
    </physiologicalReaction>
</comment>
<comment type="catalytic activity">
    <reaction evidence="1">
        <text>prostaglandin E1 + NADP(+) = 15-oxoprostaglandin E1 + NADPH + H(+)</text>
        <dbReference type="Rhea" id="RHEA:11636"/>
        <dbReference type="ChEBI" id="CHEBI:15378"/>
        <dbReference type="ChEBI" id="CHEBI:57397"/>
        <dbReference type="ChEBI" id="CHEBI:57401"/>
        <dbReference type="ChEBI" id="CHEBI:57783"/>
        <dbReference type="ChEBI" id="CHEBI:58349"/>
        <dbReference type="EC" id="1.1.1.197"/>
    </reaction>
    <physiologicalReaction direction="left-to-right" evidence="1">
        <dbReference type="Rhea" id="RHEA:11637"/>
    </physiologicalReaction>
</comment>
<comment type="catalytic activity">
    <reaction evidence="7">
        <text>menadione + NADPH + H(+) = menadiol + NADP(+)</text>
        <dbReference type="Rhea" id="RHEA:63492"/>
        <dbReference type="ChEBI" id="CHEBI:6746"/>
        <dbReference type="ChEBI" id="CHEBI:15378"/>
        <dbReference type="ChEBI" id="CHEBI:28869"/>
        <dbReference type="ChEBI" id="CHEBI:57783"/>
        <dbReference type="ChEBI" id="CHEBI:58349"/>
    </reaction>
</comment>
<comment type="catalytic activity">
    <reaction evidence="3">
        <text>prostaglandin D2 + NADP(+) = 15-oxoprostaglandin D2 + NADPH + H(+)</text>
        <dbReference type="Rhea" id="RHEA:20744"/>
        <dbReference type="ChEBI" id="CHEBI:15378"/>
        <dbReference type="ChEBI" id="CHEBI:57406"/>
        <dbReference type="ChEBI" id="CHEBI:57408"/>
        <dbReference type="ChEBI" id="CHEBI:57783"/>
        <dbReference type="ChEBI" id="CHEBI:58349"/>
        <dbReference type="EC" id="1.1.1.196"/>
    </reaction>
    <physiologicalReaction direction="left-to-right" evidence="3">
        <dbReference type="Rhea" id="RHEA:20745"/>
    </physiologicalReaction>
</comment>
<comment type="catalytic activity">
    <reaction evidence="3">
        <text>prostaglandin E2 + NADP(+) = 15-oxoprostaglandin E2 + NADPH + H(+)</text>
        <dbReference type="Rhea" id="RHEA:63476"/>
        <dbReference type="ChEBI" id="CHEBI:15378"/>
        <dbReference type="ChEBI" id="CHEBI:57400"/>
        <dbReference type="ChEBI" id="CHEBI:57783"/>
        <dbReference type="ChEBI" id="CHEBI:58349"/>
        <dbReference type="ChEBI" id="CHEBI:606564"/>
    </reaction>
    <physiologicalReaction direction="left-to-right" evidence="3">
        <dbReference type="Rhea" id="RHEA:63477"/>
    </physiologicalReaction>
</comment>
<comment type="catalytic activity">
    <reaction evidence="3">
        <text>prostaglandin F2alpha + NADP(+) = 15-oxoprostaglandin F2alpha + NADPH + H(+)</text>
        <dbReference type="Rhea" id="RHEA:63480"/>
        <dbReference type="ChEBI" id="CHEBI:15378"/>
        <dbReference type="ChEBI" id="CHEBI:57404"/>
        <dbReference type="ChEBI" id="CHEBI:57783"/>
        <dbReference type="ChEBI" id="CHEBI:58349"/>
        <dbReference type="ChEBI" id="CHEBI:133409"/>
    </reaction>
    <physiologicalReaction direction="left-to-right" evidence="3">
        <dbReference type="Rhea" id="RHEA:63481"/>
    </physiologicalReaction>
</comment>
<comment type="catalytic activity">
    <reaction evidence="1">
        <text>daunorubicin + NADPH + H(+) = 13-dihydrodaunorubicin + NADP(+)</text>
        <dbReference type="Rhea" id="RHEA:63504"/>
        <dbReference type="ChEBI" id="CHEBI:15378"/>
        <dbReference type="ChEBI" id="CHEBI:57783"/>
        <dbReference type="ChEBI" id="CHEBI:58349"/>
        <dbReference type="ChEBI" id="CHEBI:64677"/>
        <dbReference type="ChEBI" id="CHEBI:75296"/>
    </reaction>
    <physiologicalReaction direction="left-to-right" evidence="1">
        <dbReference type="Rhea" id="RHEA:63505"/>
    </physiologicalReaction>
</comment>
<comment type="catalytic activity">
    <reaction evidence="3">
        <text>S-nitrosoglutathione + NADPH + H(+) = S-(hydroxysulfenamide)glutathione + NADP(+)</text>
        <dbReference type="Rhea" id="RHEA:63500"/>
        <dbReference type="ChEBI" id="CHEBI:15378"/>
        <dbReference type="ChEBI" id="CHEBI:57783"/>
        <dbReference type="ChEBI" id="CHEBI:58349"/>
        <dbReference type="ChEBI" id="CHEBI:145544"/>
        <dbReference type="ChEBI" id="CHEBI:229723"/>
    </reaction>
</comment>
<comment type="catalytic activity">
    <reaction evidence="7">
        <text>corticosterone + NADPH + H(+) = 20beta-dihydrocorticosterone + NADP(+)</text>
        <dbReference type="Rhea" id="RHEA:70219"/>
        <dbReference type="ChEBI" id="CHEBI:15378"/>
        <dbReference type="ChEBI" id="CHEBI:16827"/>
        <dbReference type="ChEBI" id="CHEBI:57783"/>
        <dbReference type="ChEBI" id="CHEBI:58349"/>
        <dbReference type="ChEBI" id="CHEBI:189050"/>
    </reaction>
    <physiologicalReaction direction="left-to-right" evidence="7">
        <dbReference type="Rhea" id="RHEA:70220"/>
    </physiologicalReaction>
</comment>
<comment type="catalytic activity">
    <reaction evidence="1">
        <text>a primary alcohol + NADP(+) = an aldehyde + NADPH + H(+)</text>
        <dbReference type="Rhea" id="RHEA:15937"/>
        <dbReference type="ChEBI" id="CHEBI:15378"/>
        <dbReference type="ChEBI" id="CHEBI:15734"/>
        <dbReference type="ChEBI" id="CHEBI:17478"/>
        <dbReference type="ChEBI" id="CHEBI:57783"/>
        <dbReference type="ChEBI" id="CHEBI:58349"/>
        <dbReference type="EC" id="1.1.1.71"/>
    </reaction>
</comment>
<comment type="catalytic activity">
    <reaction evidence="1">
        <text>cortisol + NADPH + H(+) = 20beta-dihydrocortisol + NADP(+)</text>
        <dbReference type="Rhea" id="RHEA:70215"/>
        <dbReference type="ChEBI" id="CHEBI:15378"/>
        <dbReference type="ChEBI" id="CHEBI:17650"/>
        <dbReference type="ChEBI" id="CHEBI:57783"/>
        <dbReference type="ChEBI" id="CHEBI:58349"/>
        <dbReference type="ChEBI" id="CHEBI:139311"/>
    </reaction>
    <physiologicalReaction direction="left-to-right" evidence="1">
        <dbReference type="Rhea" id="RHEA:70216"/>
    </physiologicalReaction>
</comment>
<comment type="subunit">
    <text evidence="3">Monomer.</text>
</comment>
<comment type="subcellular location">
    <subcellularLocation>
        <location evidence="3">Cytoplasm</location>
    </subcellularLocation>
</comment>
<comment type="disruption phenotype">
    <text evidence="7">Embryonic lethal.</text>
</comment>
<comment type="similarity">
    <text evidence="8">Belongs to the short-chain dehydrogenases/reductases (SDR) family.</text>
</comment>